<keyword id="KW-0963">Cytoplasm</keyword>
<keyword id="KW-0489">Methyltransferase</keyword>
<keyword id="KW-1185">Reference proteome</keyword>
<keyword id="KW-0698">rRNA processing</keyword>
<keyword id="KW-0949">S-adenosyl-L-methionine</keyword>
<keyword id="KW-0808">Transferase</keyword>
<sequence length="320" mass="35059">MSTPTFVHRTVLLTEAVDALAIRPDGVYVDCTFGRGGHSRLILSKLGPSGRLIAFDKDPEAIAVADRLAAEDSRFNIVHNGFETLSAELARLGVAGVDGVLMDLGVSSPQIDDGSRGFSFRFDAPLDMRMDTTRGVTAAEWLATADEADIREVIKTYGEERFARKIAAAIVAQRDESPITTTRELAVLVGQNVRTREPGQDPATRTFQAIRIFVNRELDELKAVLPQAARLLNEGGRLAVISFHSLEDRIVKLYLRDVSSEEKLPAWAMVRAADMAQPPIDLVGKAIRAGDEEVRENPRARSAIMRVAQRTAAPWREGDA</sequence>
<proteinExistence type="inferred from homology"/>
<reference key="1">
    <citation type="journal article" date="2003" name="Proc. Natl. Acad. Sci. U.S.A.">
        <title>The complete genome sequence of Chromobacterium violaceum reveals remarkable and exploitable bacterial adaptability.</title>
        <authorList>
            <person name="Vasconcelos A.T.R."/>
            <person name="de Almeida D.F."/>
            <person name="Hungria M."/>
            <person name="Guimaraes C.T."/>
            <person name="Antonio R.V."/>
            <person name="Almeida F.C."/>
            <person name="de Almeida L.G.P."/>
            <person name="de Almeida R."/>
            <person name="Alves-Gomes J.A."/>
            <person name="Andrade E.M."/>
            <person name="Araripe J."/>
            <person name="de Araujo M.F.F."/>
            <person name="Astolfi-Filho S."/>
            <person name="Azevedo V."/>
            <person name="Baptista A.J."/>
            <person name="Bataus L.A.M."/>
            <person name="Batista J.S."/>
            <person name="Belo A."/>
            <person name="van den Berg C."/>
            <person name="Bogo M."/>
            <person name="Bonatto S."/>
            <person name="Bordignon J."/>
            <person name="Brigido M.M."/>
            <person name="Brito C.A."/>
            <person name="Brocchi M."/>
            <person name="Burity H.A."/>
            <person name="Camargo A.A."/>
            <person name="Cardoso D.D.P."/>
            <person name="Carneiro N.P."/>
            <person name="Carraro D.M."/>
            <person name="Carvalho C.M.B."/>
            <person name="Cascardo J.C.M."/>
            <person name="Cavada B.S."/>
            <person name="Chueire L.M.O."/>
            <person name="Creczynski-Pasa T.B."/>
            <person name="Cunha-Junior N.C."/>
            <person name="Fagundes N."/>
            <person name="Falcao C.L."/>
            <person name="Fantinatti F."/>
            <person name="Farias I.P."/>
            <person name="Felipe M.S.S."/>
            <person name="Ferrari L.P."/>
            <person name="Ferro J.A."/>
            <person name="Ferro M.I.T."/>
            <person name="Franco G.R."/>
            <person name="Freitas N.S.A."/>
            <person name="Furlan L.R."/>
            <person name="Gazzinelli R.T."/>
            <person name="Gomes E.A."/>
            <person name="Goncalves P.R."/>
            <person name="Grangeiro T.B."/>
            <person name="Grattapaglia D."/>
            <person name="Grisard E.C."/>
            <person name="Hanna E.S."/>
            <person name="Jardim S.N."/>
            <person name="Laurino J."/>
            <person name="Leoi L.C.T."/>
            <person name="Lima L.F.A."/>
            <person name="Loureiro M.F."/>
            <person name="Lyra M.C.C.P."/>
            <person name="Madeira H.M.F."/>
            <person name="Manfio G.P."/>
            <person name="Maranhao A.Q."/>
            <person name="Martins W.S."/>
            <person name="di Mauro S.M.Z."/>
            <person name="de Medeiros S.R.B."/>
            <person name="Meissner R.V."/>
            <person name="Moreira M.A.M."/>
            <person name="Nascimento F.F."/>
            <person name="Nicolas M.F."/>
            <person name="Oliveira J.G."/>
            <person name="Oliveira S.C."/>
            <person name="Paixao R.F.C."/>
            <person name="Parente J.A."/>
            <person name="Pedrosa F.O."/>
            <person name="Pena S.D.J."/>
            <person name="Pereira J.O."/>
            <person name="Pereira M."/>
            <person name="Pinto L.S.R.C."/>
            <person name="Pinto L.S."/>
            <person name="Porto J.I.R."/>
            <person name="Potrich D.P."/>
            <person name="Ramalho-Neto C.E."/>
            <person name="Reis A.M.M."/>
            <person name="Rigo L.U."/>
            <person name="Rondinelli E."/>
            <person name="Santos E.B.P."/>
            <person name="Santos F.R."/>
            <person name="Schneider M.P.C."/>
            <person name="Seuanez H.N."/>
            <person name="Silva A.M.R."/>
            <person name="da Silva A.L.C."/>
            <person name="Silva D.W."/>
            <person name="Silva R."/>
            <person name="Simoes I.C."/>
            <person name="Simon D."/>
            <person name="Soares C.M.A."/>
            <person name="Soares R.B.A."/>
            <person name="Souza E.M."/>
            <person name="Souza K.R.L."/>
            <person name="Souza R.C."/>
            <person name="Steffens M.B.R."/>
            <person name="Steindel M."/>
            <person name="Teixeira S.R."/>
            <person name="Urmenyi T."/>
            <person name="Vettore A."/>
            <person name="Wassem R."/>
            <person name="Zaha A."/>
            <person name="Simpson A.J.G."/>
        </authorList>
    </citation>
    <scope>NUCLEOTIDE SEQUENCE [LARGE SCALE GENOMIC DNA]</scope>
    <source>
        <strain>ATCC 12472 / DSM 30191 / JCM 1249 / CCUG 213 / NBRC 12614 / NCIMB 9131 / NCTC 9757 / MK</strain>
    </source>
</reference>
<gene>
    <name evidence="1" type="primary">rsmH</name>
    <name type="synonym">mraW</name>
    <name type="ordered locus">CV_4351</name>
</gene>
<organism>
    <name type="scientific">Chromobacterium violaceum (strain ATCC 12472 / DSM 30191 / JCM 1249 / CCUG 213 / NBRC 12614 / NCIMB 9131 / NCTC 9757 / MK)</name>
    <dbReference type="NCBI Taxonomy" id="243365"/>
    <lineage>
        <taxon>Bacteria</taxon>
        <taxon>Pseudomonadati</taxon>
        <taxon>Pseudomonadota</taxon>
        <taxon>Betaproteobacteria</taxon>
        <taxon>Neisseriales</taxon>
        <taxon>Chromobacteriaceae</taxon>
        <taxon>Chromobacterium</taxon>
    </lineage>
</organism>
<protein>
    <recommendedName>
        <fullName evidence="1">Ribosomal RNA small subunit methyltransferase H</fullName>
        <ecNumber evidence="1">2.1.1.199</ecNumber>
    </recommendedName>
    <alternativeName>
        <fullName evidence="1">16S rRNA m(4)C1402 methyltransferase</fullName>
    </alternativeName>
    <alternativeName>
        <fullName evidence="1">rRNA (cytosine-N(4)-)-methyltransferase RsmH</fullName>
    </alternativeName>
</protein>
<evidence type="ECO:0000255" key="1">
    <source>
        <dbReference type="HAMAP-Rule" id="MF_01007"/>
    </source>
</evidence>
<comment type="function">
    <text evidence="1">Specifically methylates the N4 position of cytidine in position 1402 (C1402) of 16S rRNA.</text>
</comment>
<comment type="catalytic activity">
    <reaction evidence="1">
        <text>cytidine(1402) in 16S rRNA + S-adenosyl-L-methionine = N(4)-methylcytidine(1402) in 16S rRNA + S-adenosyl-L-homocysteine + H(+)</text>
        <dbReference type="Rhea" id="RHEA:42928"/>
        <dbReference type="Rhea" id="RHEA-COMP:10286"/>
        <dbReference type="Rhea" id="RHEA-COMP:10287"/>
        <dbReference type="ChEBI" id="CHEBI:15378"/>
        <dbReference type="ChEBI" id="CHEBI:57856"/>
        <dbReference type="ChEBI" id="CHEBI:59789"/>
        <dbReference type="ChEBI" id="CHEBI:74506"/>
        <dbReference type="ChEBI" id="CHEBI:82748"/>
        <dbReference type="EC" id="2.1.1.199"/>
    </reaction>
</comment>
<comment type="subcellular location">
    <subcellularLocation>
        <location evidence="1">Cytoplasm</location>
    </subcellularLocation>
</comment>
<comment type="similarity">
    <text evidence="1">Belongs to the methyltransferase superfamily. RsmH family.</text>
</comment>
<accession>Q7NPZ1</accession>
<feature type="chain" id="PRO_0000108609" description="Ribosomal RNA small subunit methyltransferase H">
    <location>
        <begin position="1"/>
        <end position="320"/>
    </location>
</feature>
<feature type="binding site" evidence="1">
    <location>
        <begin position="36"/>
        <end position="38"/>
    </location>
    <ligand>
        <name>S-adenosyl-L-methionine</name>
        <dbReference type="ChEBI" id="CHEBI:59789"/>
    </ligand>
</feature>
<feature type="binding site" evidence="1">
    <location>
        <position position="56"/>
    </location>
    <ligand>
        <name>S-adenosyl-L-methionine</name>
        <dbReference type="ChEBI" id="CHEBI:59789"/>
    </ligand>
</feature>
<feature type="binding site" evidence="1">
    <location>
        <position position="82"/>
    </location>
    <ligand>
        <name>S-adenosyl-L-methionine</name>
        <dbReference type="ChEBI" id="CHEBI:59789"/>
    </ligand>
</feature>
<feature type="binding site" evidence="1">
    <location>
        <position position="103"/>
    </location>
    <ligand>
        <name>S-adenosyl-L-methionine</name>
        <dbReference type="ChEBI" id="CHEBI:59789"/>
    </ligand>
</feature>
<feature type="binding site" evidence="1">
    <location>
        <position position="110"/>
    </location>
    <ligand>
        <name>S-adenosyl-L-methionine</name>
        <dbReference type="ChEBI" id="CHEBI:59789"/>
    </ligand>
</feature>
<dbReference type="EC" id="2.1.1.199" evidence="1"/>
<dbReference type="EMBL" id="AE016825">
    <property type="protein sequence ID" value="AAQ62010.1"/>
    <property type="molecule type" value="Genomic_DNA"/>
</dbReference>
<dbReference type="RefSeq" id="WP_011137897.1">
    <property type="nucleotide sequence ID" value="NC_005085.1"/>
</dbReference>
<dbReference type="SMR" id="Q7NPZ1"/>
<dbReference type="STRING" id="243365.CV_4351"/>
<dbReference type="KEGG" id="cvi:CV_4351"/>
<dbReference type="eggNOG" id="COG0275">
    <property type="taxonomic scope" value="Bacteria"/>
</dbReference>
<dbReference type="HOGENOM" id="CLU_038422_2_0_4"/>
<dbReference type="OrthoDB" id="9806637at2"/>
<dbReference type="Proteomes" id="UP000001424">
    <property type="component" value="Chromosome"/>
</dbReference>
<dbReference type="GO" id="GO:0005737">
    <property type="term" value="C:cytoplasm"/>
    <property type="evidence" value="ECO:0007669"/>
    <property type="project" value="UniProtKB-SubCell"/>
</dbReference>
<dbReference type="GO" id="GO:0071424">
    <property type="term" value="F:rRNA (cytosine-N4-)-methyltransferase activity"/>
    <property type="evidence" value="ECO:0007669"/>
    <property type="project" value="UniProtKB-UniRule"/>
</dbReference>
<dbReference type="GO" id="GO:0070475">
    <property type="term" value="P:rRNA base methylation"/>
    <property type="evidence" value="ECO:0007669"/>
    <property type="project" value="UniProtKB-UniRule"/>
</dbReference>
<dbReference type="FunFam" id="1.10.150.170:FF:000001">
    <property type="entry name" value="Ribosomal RNA small subunit methyltransferase H"/>
    <property type="match status" value="1"/>
</dbReference>
<dbReference type="Gene3D" id="1.10.150.170">
    <property type="entry name" value="Putative methyltransferase TM0872, insert domain"/>
    <property type="match status" value="1"/>
</dbReference>
<dbReference type="Gene3D" id="3.40.50.150">
    <property type="entry name" value="Vaccinia Virus protein VP39"/>
    <property type="match status" value="1"/>
</dbReference>
<dbReference type="HAMAP" id="MF_01007">
    <property type="entry name" value="16SrRNA_methyltr_H"/>
    <property type="match status" value="1"/>
</dbReference>
<dbReference type="InterPro" id="IPR002903">
    <property type="entry name" value="RsmH"/>
</dbReference>
<dbReference type="InterPro" id="IPR023397">
    <property type="entry name" value="SAM-dep_MeTrfase_MraW_recog"/>
</dbReference>
<dbReference type="InterPro" id="IPR029063">
    <property type="entry name" value="SAM-dependent_MTases_sf"/>
</dbReference>
<dbReference type="NCBIfam" id="TIGR00006">
    <property type="entry name" value="16S rRNA (cytosine(1402)-N(4))-methyltransferase RsmH"/>
    <property type="match status" value="1"/>
</dbReference>
<dbReference type="PANTHER" id="PTHR11265:SF0">
    <property type="entry name" value="12S RRNA N4-METHYLCYTIDINE METHYLTRANSFERASE"/>
    <property type="match status" value="1"/>
</dbReference>
<dbReference type="PANTHER" id="PTHR11265">
    <property type="entry name" value="S-ADENOSYL-METHYLTRANSFERASE MRAW"/>
    <property type="match status" value="1"/>
</dbReference>
<dbReference type="Pfam" id="PF01795">
    <property type="entry name" value="Methyltransf_5"/>
    <property type="match status" value="1"/>
</dbReference>
<dbReference type="PIRSF" id="PIRSF004486">
    <property type="entry name" value="MraW"/>
    <property type="match status" value="1"/>
</dbReference>
<dbReference type="SUPFAM" id="SSF81799">
    <property type="entry name" value="Putative methyltransferase TM0872, insert domain"/>
    <property type="match status" value="1"/>
</dbReference>
<dbReference type="SUPFAM" id="SSF53335">
    <property type="entry name" value="S-adenosyl-L-methionine-dependent methyltransferases"/>
    <property type="match status" value="1"/>
</dbReference>
<name>RSMH_CHRVO</name>